<organism>
    <name type="scientific">Campylobacter curvus (strain 525.92)</name>
    <dbReference type="NCBI Taxonomy" id="360105"/>
    <lineage>
        <taxon>Bacteria</taxon>
        <taxon>Pseudomonadati</taxon>
        <taxon>Campylobacterota</taxon>
        <taxon>Epsilonproteobacteria</taxon>
        <taxon>Campylobacterales</taxon>
        <taxon>Campylobacteraceae</taxon>
        <taxon>Campylobacter</taxon>
    </lineage>
</organism>
<sequence length="233" mass="25013">MGKTTKRFQELLKKVEENKIYNLDEAITTIKTLASAKFDETVEIALKLNVDPRHADQMVRGSVVLPAGTGKTVRVAVIAKDAKADEAKAAGADIVGSDELVEDIQKGIMNFDVLIATPNLMGLVGKVGRILGPKGLMPNPKTGTVTMDVAQAVNNAKSGQVNFRVDKQGNIHAGLGKVSFSKEQLNENISTFIKAINKHKPSASKGRYVKNASLSLTMSPSIALDTQEVMDLK</sequence>
<name>RL1_CAMC5</name>
<feature type="chain" id="PRO_1000051902" description="Large ribosomal subunit protein uL1">
    <location>
        <begin position="1"/>
        <end position="233"/>
    </location>
</feature>
<evidence type="ECO:0000255" key="1">
    <source>
        <dbReference type="HAMAP-Rule" id="MF_01318"/>
    </source>
</evidence>
<evidence type="ECO:0000305" key="2"/>
<reference key="1">
    <citation type="submission" date="2007-07" db="EMBL/GenBank/DDBJ databases">
        <title>Genome sequence of Campylobacter curvus 525.92 isolated from human feces.</title>
        <authorList>
            <person name="Fouts D.E."/>
            <person name="Mongodin E.F."/>
            <person name="Puiu D."/>
            <person name="Sebastian Y."/>
            <person name="Miller W.G."/>
            <person name="Mandrell R.E."/>
            <person name="Lastovica A.J."/>
            <person name="Nelson K.E."/>
        </authorList>
    </citation>
    <scope>NUCLEOTIDE SEQUENCE [LARGE SCALE GENOMIC DNA]</scope>
    <source>
        <strain>525.92</strain>
    </source>
</reference>
<dbReference type="EMBL" id="CP000767">
    <property type="protein sequence ID" value="EAU01259.1"/>
    <property type="molecule type" value="Genomic_DNA"/>
</dbReference>
<dbReference type="RefSeq" id="WP_009650539.1">
    <property type="nucleotide sequence ID" value="NC_009715.2"/>
</dbReference>
<dbReference type="SMR" id="A7GZK2"/>
<dbReference type="STRING" id="360105.CCV52592_0178"/>
<dbReference type="GeneID" id="61002655"/>
<dbReference type="KEGG" id="ccv:CCV52592_0178"/>
<dbReference type="HOGENOM" id="CLU_062853_0_0_7"/>
<dbReference type="OrthoDB" id="9803740at2"/>
<dbReference type="Proteomes" id="UP000006380">
    <property type="component" value="Chromosome"/>
</dbReference>
<dbReference type="GO" id="GO:0022625">
    <property type="term" value="C:cytosolic large ribosomal subunit"/>
    <property type="evidence" value="ECO:0007669"/>
    <property type="project" value="TreeGrafter"/>
</dbReference>
<dbReference type="GO" id="GO:0019843">
    <property type="term" value="F:rRNA binding"/>
    <property type="evidence" value="ECO:0007669"/>
    <property type="project" value="UniProtKB-UniRule"/>
</dbReference>
<dbReference type="GO" id="GO:0003735">
    <property type="term" value="F:structural constituent of ribosome"/>
    <property type="evidence" value="ECO:0007669"/>
    <property type="project" value="InterPro"/>
</dbReference>
<dbReference type="GO" id="GO:0000049">
    <property type="term" value="F:tRNA binding"/>
    <property type="evidence" value="ECO:0007669"/>
    <property type="project" value="UniProtKB-KW"/>
</dbReference>
<dbReference type="GO" id="GO:0006417">
    <property type="term" value="P:regulation of translation"/>
    <property type="evidence" value="ECO:0007669"/>
    <property type="project" value="UniProtKB-KW"/>
</dbReference>
<dbReference type="GO" id="GO:0006412">
    <property type="term" value="P:translation"/>
    <property type="evidence" value="ECO:0007669"/>
    <property type="project" value="UniProtKB-UniRule"/>
</dbReference>
<dbReference type="CDD" id="cd00403">
    <property type="entry name" value="Ribosomal_L1"/>
    <property type="match status" value="1"/>
</dbReference>
<dbReference type="FunFam" id="3.40.50.790:FF:000001">
    <property type="entry name" value="50S ribosomal protein L1"/>
    <property type="match status" value="1"/>
</dbReference>
<dbReference type="Gene3D" id="3.30.190.20">
    <property type="match status" value="1"/>
</dbReference>
<dbReference type="Gene3D" id="3.40.50.790">
    <property type="match status" value="1"/>
</dbReference>
<dbReference type="HAMAP" id="MF_01318_B">
    <property type="entry name" value="Ribosomal_uL1_B"/>
    <property type="match status" value="1"/>
</dbReference>
<dbReference type="InterPro" id="IPR005878">
    <property type="entry name" value="Ribosom_uL1_bac-type"/>
</dbReference>
<dbReference type="InterPro" id="IPR002143">
    <property type="entry name" value="Ribosomal_uL1"/>
</dbReference>
<dbReference type="InterPro" id="IPR023674">
    <property type="entry name" value="Ribosomal_uL1-like"/>
</dbReference>
<dbReference type="InterPro" id="IPR028364">
    <property type="entry name" value="Ribosomal_uL1/biogenesis"/>
</dbReference>
<dbReference type="InterPro" id="IPR016095">
    <property type="entry name" value="Ribosomal_uL1_3-a/b-sand"/>
</dbReference>
<dbReference type="InterPro" id="IPR023673">
    <property type="entry name" value="Ribosomal_uL1_CS"/>
</dbReference>
<dbReference type="NCBIfam" id="TIGR01169">
    <property type="entry name" value="rplA_bact"/>
    <property type="match status" value="1"/>
</dbReference>
<dbReference type="PANTHER" id="PTHR36427">
    <property type="entry name" value="54S RIBOSOMAL PROTEIN L1, MITOCHONDRIAL"/>
    <property type="match status" value="1"/>
</dbReference>
<dbReference type="PANTHER" id="PTHR36427:SF3">
    <property type="entry name" value="LARGE RIBOSOMAL SUBUNIT PROTEIN UL1M"/>
    <property type="match status" value="1"/>
</dbReference>
<dbReference type="Pfam" id="PF00687">
    <property type="entry name" value="Ribosomal_L1"/>
    <property type="match status" value="1"/>
</dbReference>
<dbReference type="PIRSF" id="PIRSF002155">
    <property type="entry name" value="Ribosomal_L1"/>
    <property type="match status" value="1"/>
</dbReference>
<dbReference type="SUPFAM" id="SSF56808">
    <property type="entry name" value="Ribosomal protein L1"/>
    <property type="match status" value="1"/>
</dbReference>
<dbReference type="PROSITE" id="PS01199">
    <property type="entry name" value="RIBOSOMAL_L1"/>
    <property type="match status" value="1"/>
</dbReference>
<keyword id="KW-1185">Reference proteome</keyword>
<keyword id="KW-0678">Repressor</keyword>
<keyword id="KW-0687">Ribonucleoprotein</keyword>
<keyword id="KW-0689">Ribosomal protein</keyword>
<keyword id="KW-0694">RNA-binding</keyword>
<keyword id="KW-0699">rRNA-binding</keyword>
<keyword id="KW-0810">Translation regulation</keyword>
<keyword id="KW-0820">tRNA-binding</keyword>
<protein>
    <recommendedName>
        <fullName evidence="1">Large ribosomal subunit protein uL1</fullName>
    </recommendedName>
    <alternativeName>
        <fullName evidence="2">50S ribosomal protein L1</fullName>
    </alternativeName>
</protein>
<accession>A7GZK2</accession>
<comment type="function">
    <text evidence="1">Binds directly to 23S rRNA. The L1 stalk is quite mobile in the ribosome, and is involved in E site tRNA release.</text>
</comment>
<comment type="function">
    <text evidence="1">Protein L1 is also a translational repressor protein, it controls the translation of the L11 operon by binding to its mRNA.</text>
</comment>
<comment type="subunit">
    <text evidence="1">Part of the 50S ribosomal subunit.</text>
</comment>
<comment type="similarity">
    <text evidence="1">Belongs to the universal ribosomal protein uL1 family.</text>
</comment>
<gene>
    <name evidence="1" type="primary">rplA</name>
    <name type="ordered locus">Ccur92_13400</name>
    <name type="ORF">CCV52592_0178</name>
</gene>
<proteinExistence type="inferred from homology"/>